<feature type="chain" id="PRO_1000142149" description="Large ribosomal subunit protein uL4">
    <location>
        <begin position="1"/>
        <end position="222"/>
    </location>
</feature>
<comment type="function">
    <text evidence="1">One of the primary rRNA binding proteins, this protein initially binds near the 5'-end of the 23S rRNA. It is important during the early stages of 50S assembly. It makes multiple contacts with different domains of the 23S rRNA in the assembled 50S subunit and ribosome.</text>
</comment>
<comment type="function">
    <text evidence="1">Forms part of the polypeptide exit tunnel.</text>
</comment>
<comment type="subunit">
    <text evidence="1">Part of the 50S ribosomal subunit.</text>
</comment>
<comment type="similarity">
    <text evidence="1">Belongs to the universal ribosomal protein uL4 family.</text>
</comment>
<sequence>MLNLRAVMELLTIEKAQDYGLTLPETGQRDQVLHDALVGYLANSRSGTRATKTKATVKASGKKPWRQKGTGRARAGYVSSPVWVGGGVVFGPQPRDFSKNIPKKIKGLALLKAFAAKVRSEEVYCLEKVEMTEIKTKKMLSLLEGWDGKESGLLILKNPSRNVLLSGRNIPHLGIVRAQDVNALDLLGFKKVFLERPAIEVLVERVKKFKREKSQNENGGTR</sequence>
<gene>
    <name evidence="1" type="primary">rplD</name>
    <name type="ordered locus">Minf_0684</name>
</gene>
<name>RL4_METI4</name>
<organism>
    <name type="scientific">Methylacidiphilum infernorum (isolate V4)</name>
    <name type="common">Methylokorus infernorum (strain V4)</name>
    <dbReference type="NCBI Taxonomy" id="481448"/>
    <lineage>
        <taxon>Bacteria</taxon>
        <taxon>Pseudomonadati</taxon>
        <taxon>Verrucomicrobiota</taxon>
        <taxon>Methylacidiphilae</taxon>
        <taxon>Methylacidiphilales</taxon>
        <taxon>Methylacidiphilaceae</taxon>
        <taxon>Methylacidiphilum (ex Ratnadevi et al. 2023)</taxon>
    </lineage>
</organism>
<protein>
    <recommendedName>
        <fullName evidence="1">Large ribosomal subunit protein uL4</fullName>
    </recommendedName>
    <alternativeName>
        <fullName evidence="2">50S ribosomal protein L4</fullName>
    </alternativeName>
</protein>
<proteinExistence type="inferred from homology"/>
<evidence type="ECO:0000255" key="1">
    <source>
        <dbReference type="HAMAP-Rule" id="MF_01328"/>
    </source>
</evidence>
<evidence type="ECO:0000305" key="2"/>
<reference key="1">
    <citation type="journal article" date="2008" name="Biol. Direct">
        <title>Complete genome sequence of the extremely acidophilic methanotroph isolate V4, Methylacidiphilum infernorum, a representative of the bacterial phylum Verrucomicrobia.</title>
        <authorList>
            <person name="Hou S."/>
            <person name="Makarova K.S."/>
            <person name="Saw J.H."/>
            <person name="Senin P."/>
            <person name="Ly B.V."/>
            <person name="Zhou Z."/>
            <person name="Ren Y."/>
            <person name="Wang J."/>
            <person name="Galperin M.Y."/>
            <person name="Omelchenko M.V."/>
            <person name="Wolf Y.I."/>
            <person name="Yutin N."/>
            <person name="Koonin E.V."/>
            <person name="Stott M.B."/>
            <person name="Mountain B.W."/>
            <person name="Crowe M.A."/>
            <person name="Smirnova A.V."/>
            <person name="Dunfield P.F."/>
            <person name="Feng L."/>
            <person name="Wang L."/>
            <person name="Alam M."/>
        </authorList>
    </citation>
    <scope>NUCLEOTIDE SEQUENCE [LARGE SCALE GENOMIC DNA]</scope>
    <source>
        <strain>Isolate V4</strain>
    </source>
</reference>
<keyword id="KW-0687">Ribonucleoprotein</keyword>
<keyword id="KW-0689">Ribosomal protein</keyword>
<keyword id="KW-0694">RNA-binding</keyword>
<keyword id="KW-0699">rRNA-binding</keyword>
<accession>B3E0I5</accession>
<dbReference type="EMBL" id="CP000975">
    <property type="protein sequence ID" value="ACD82739.1"/>
    <property type="molecule type" value="Genomic_DNA"/>
</dbReference>
<dbReference type="SMR" id="B3E0I5"/>
<dbReference type="STRING" id="481448.Minf_0684"/>
<dbReference type="KEGG" id="min:Minf_0684"/>
<dbReference type="eggNOG" id="COG0088">
    <property type="taxonomic scope" value="Bacteria"/>
</dbReference>
<dbReference type="HOGENOM" id="CLU_041575_5_2_0"/>
<dbReference type="OrthoDB" id="9803201at2"/>
<dbReference type="Proteomes" id="UP000009149">
    <property type="component" value="Chromosome"/>
</dbReference>
<dbReference type="GO" id="GO:1990904">
    <property type="term" value="C:ribonucleoprotein complex"/>
    <property type="evidence" value="ECO:0007669"/>
    <property type="project" value="UniProtKB-KW"/>
</dbReference>
<dbReference type="GO" id="GO:0005840">
    <property type="term" value="C:ribosome"/>
    <property type="evidence" value="ECO:0007669"/>
    <property type="project" value="UniProtKB-KW"/>
</dbReference>
<dbReference type="GO" id="GO:0019843">
    <property type="term" value="F:rRNA binding"/>
    <property type="evidence" value="ECO:0007669"/>
    <property type="project" value="UniProtKB-UniRule"/>
</dbReference>
<dbReference type="GO" id="GO:0003735">
    <property type="term" value="F:structural constituent of ribosome"/>
    <property type="evidence" value="ECO:0007669"/>
    <property type="project" value="InterPro"/>
</dbReference>
<dbReference type="GO" id="GO:0006412">
    <property type="term" value="P:translation"/>
    <property type="evidence" value="ECO:0007669"/>
    <property type="project" value="UniProtKB-UniRule"/>
</dbReference>
<dbReference type="Gene3D" id="3.40.1370.10">
    <property type="match status" value="1"/>
</dbReference>
<dbReference type="HAMAP" id="MF_01328_B">
    <property type="entry name" value="Ribosomal_uL4_B"/>
    <property type="match status" value="1"/>
</dbReference>
<dbReference type="InterPro" id="IPR002136">
    <property type="entry name" value="Ribosomal_uL4"/>
</dbReference>
<dbReference type="InterPro" id="IPR013005">
    <property type="entry name" value="Ribosomal_uL4-like"/>
</dbReference>
<dbReference type="InterPro" id="IPR023574">
    <property type="entry name" value="Ribosomal_uL4_dom_sf"/>
</dbReference>
<dbReference type="NCBIfam" id="TIGR03953">
    <property type="entry name" value="rplD_bact"/>
    <property type="match status" value="1"/>
</dbReference>
<dbReference type="PANTHER" id="PTHR10746">
    <property type="entry name" value="50S RIBOSOMAL PROTEIN L4"/>
    <property type="match status" value="1"/>
</dbReference>
<dbReference type="PANTHER" id="PTHR10746:SF6">
    <property type="entry name" value="LARGE RIBOSOMAL SUBUNIT PROTEIN UL4M"/>
    <property type="match status" value="1"/>
</dbReference>
<dbReference type="Pfam" id="PF00573">
    <property type="entry name" value="Ribosomal_L4"/>
    <property type="match status" value="1"/>
</dbReference>
<dbReference type="SUPFAM" id="SSF52166">
    <property type="entry name" value="Ribosomal protein L4"/>
    <property type="match status" value="1"/>
</dbReference>